<feature type="chain" id="PRO_1000198391" description="Dual-action ribosomal maturation protein DarP">
    <location>
        <begin position="1"/>
        <end position="173"/>
    </location>
</feature>
<keyword id="KW-0963">Cytoplasm</keyword>
<keyword id="KW-0690">Ribosome biogenesis</keyword>
<keyword id="KW-0694">RNA-binding</keyword>
<keyword id="KW-0699">rRNA-binding</keyword>
<protein>
    <recommendedName>
        <fullName evidence="1">Dual-action ribosomal maturation protein DarP</fullName>
    </recommendedName>
    <alternativeName>
        <fullName evidence="1">Large ribosomal subunit assembly factor DarP</fullName>
    </alternativeName>
</protein>
<proteinExistence type="inferred from homology"/>
<reference key="1">
    <citation type="submission" date="2008-02" db="EMBL/GenBank/DDBJ databases">
        <title>Complete sequence of Pseudomonas putida W619.</title>
        <authorList>
            <person name="Copeland A."/>
            <person name="Lucas S."/>
            <person name="Lapidus A."/>
            <person name="Barry K."/>
            <person name="Detter J.C."/>
            <person name="Glavina del Rio T."/>
            <person name="Dalin E."/>
            <person name="Tice H."/>
            <person name="Pitluck S."/>
            <person name="Chain P."/>
            <person name="Malfatti S."/>
            <person name="Shin M."/>
            <person name="Vergez L."/>
            <person name="Schmutz J."/>
            <person name="Larimer F."/>
            <person name="Land M."/>
            <person name="Hauser L."/>
            <person name="Kyrpides N."/>
            <person name="Kim E."/>
            <person name="Taghavi S."/>
            <person name="Vangronsveld D."/>
            <person name="van der Lelie D."/>
            <person name="Richardson P."/>
        </authorList>
    </citation>
    <scope>NUCLEOTIDE SEQUENCE [LARGE SCALE GENOMIC DNA]</scope>
    <source>
        <strain>W619</strain>
    </source>
</reference>
<gene>
    <name evidence="1" type="primary">darP</name>
    <name type="ordered locus">PputW619_4274</name>
</gene>
<comment type="function">
    <text evidence="1">Member of a network of 50S ribosomal subunit biogenesis factors which assembles along the 30S-50S interface, preventing incorrect 23S rRNA structures from forming. Promotes peptidyl transferase center (PTC) maturation.</text>
</comment>
<comment type="subcellular location">
    <subcellularLocation>
        <location evidence="1">Cytoplasm</location>
    </subcellularLocation>
    <text evidence="1">Associates with late stage pre-50S ribosomal subunits.</text>
</comment>
<comment type="similarity">
    <text evidence="1">Belongs to the DarP family.</text>
</comment>
<accession>B1JDN1</accession>
<sequence length="173" mass="20301">MVDSYDDAFDGEKSKTQIKRELHALVELGERLTTVKADTLARLPLTDELRKALAEACKHTAHGARKRHMSFVGKLMRDQDLDAIHAVLEQIDSSSRQYNERFHNLERWRDRLIDGNDEDLERFVNEYPDTDRQQLRSLIRHAQHEKARNKPPAAARKVFKYIRDLDELQRGLR</sequence>
<organism>
    <name type="scientific">Pseudomonas putida (strain W619)</name>
    <dbReference type="NCBI Taxonomy" id="390235"/>
    <lineage>
        <taxon>Bacteria</taxon>
        <taxon>Pseudomonadati</taxon>
        <taxon>Pseudomonadota</taxon>
        <taxon>Gammaproteobacteria</taxon>
        <taxon>Pseudomonadales</taxon>
        <taxon>Pseudomonadaceae</taxon>
        <taxon>Pseudomonas</taxon>
    </lineage>
</organism>
<name>DARP_PSEPW</name>
<dbReference type="EMBL" id="CP000949">
    <property type="protein sequence ID" value="ACA74754.1"/>
    <property type="molecule type" value="Genomic_DNA"/>
</dbReference>
<dbReference type="SMR" id="B1JDN1"/>
<dbReference type="STRING" id="390235.PputW619_4274"/>
<dbReference type="KEGG" id="ppw:PputW619_4274"/>
<dbReference type="eggNOG" id="COG3028">
    <property type="taxonomic scope" value="Bacteria"/>
</dbReference>
<dbReference type="HOGENOM" id="CLU_106757_4_0_6"/>
<dbReference type="OrthoDB" id="5293604at2"/>
<dbReference type="GO" id="GO:0005829">
    <property type="term" value="C:cytosol"/>
    <property type="evidence" value="ECO:0007669"/>
    <property type="project" value="TreeGrafter"/>
</dbReference>
<dbReference type="GO" id="GO:0043022">
    <property type="term" value="F:ribosome binding"/>
    <property type="evidence" value="ECO:0007669"/>
    <property type="project" value="UniProtKB-UniRule"/>
</dbReference>
<dbReference type="GO" id="GO:0019843">
    <property type="term" value="F:rRNA binding"/>
    <property type="evidence" value="ECO:0007669"/>
    <property type="project" value="UniProtKB-UniRule"/>
</dbReference>
<dbReference type="GO" id="GO:1902626">
    <property type="term" value="P:assembly of large subunit precursor of preribosome"/>
    <property type="evidence" value="ECO:0007669"/>
    <property type="project" value="UniProtKB-UniRule"/>
</dbReference>
<dbReference type="CDD" id="cd16331">
    <property type="entry name" value="YjgA-like"/>
    <property type="match status" value="1"/>
</dbReference>
<dbReference type="FunFam" id="1.10.60.30:FF:000002">
    <property type="entry name" value="UPF0307 protein YjgA"/>
    <property type="match status" value="1"/>
</dbReference>
<dbReference type="Gene3D" id="1.10.60.30">
    <property type="entry name" value="PSPTO4464-like domains"/>
    <property type="match status" value="2"/>
</dbReference>
<dbReference type="HAMAP" id="MF_00765">
    <property type="entry name" value="DarP"/>
    <property type="match status" value="1"/>
</dbReference>
<dbReference type="InterPro" id="IPR006839">
    <property type="entry name" value="DarP"/>
</dbReference>
<dbReference type="InterPro" id="IPR023153">
    <property type="entry name" value="DarP_sf"/>
</dbReference>
<dbReference type="NCBIfam" id="NF003593">
    <property type="entry name" value="PRK05255.1-1"/>
    <property type="match status" value="1"/>
</dbReference>
<dbReference type="PANTHER" id="PTHR38101">
    <property type="entry name" value="UPF0307 PROTEIN YJGA"/>
    <property type="match status" value="1"/>
</dbReference>
<dbReference type="PANTHER" id="PTHR38101:SF1">
    <property type="entry name" value="UPF0307 PROTEIN YJGA"/>
    <property type="match status" value="1"/>
</dbReference>
<dbReference type="Pfam" id="PF04751">
    <property type="entry name" value="DarP"/>
    <property type="match status" value="1"/>
</dbReference>
<dbReference type="PIRSF" id="PIRSF016183">
    <property type="entry name" value="UCP016183"/>
    <property type="match status" value="1"/>
</dbReference>
<dbReference type="SUPFAM" id="SSF158710">
    <property type="entry name" value="PSPTO4464-like"/>
    <property type="match status" value="1"/>
</dbReference>
<evidence type="ECO:0000255" key="1">
    <source>
        <dbReference type="HAMAP-Rule" id="MF_00765"/>
    </source>
</evidence>